<comment type="function">
    <text evidence="1">Involved in unsaturated fatty acids biosynthesis. Catalyzes the dehydration of short chain beta-hydroxyacyl-ACPs and long chain saturated and unsaturated beta-hydroxyacyl-ACPs.</text>
</comment>
<comment type="catalytic activity">
    <reaction evidence="1">
        <text>a (3R)-hydroxyacyl-[ACP] = a (2E)-enoyl-[ACP] + H2O</text>
        <dbReference type="Rhea" id="RHEA:13097"/>
        <dbReference type="Rhea" id="RHEA-COMP:9925"/>
        <dbReference type="Rhea" id="RHEA-COMP:9945"/>
        <dbReference type="ChEBI" id="CHEBI:15377"/>
        <dbReference type="ChEBI" id="CHEBI:78784"/>
        <dbReference type="ChEBI" id="CHEBI:78827"/>
        <dbReference type="EC" id="4.2.1.59"/>
    </reaction>
</comment>
<comment type="subcellular location">
    <subcellularLocation>
        <location evidence="1">Cytoplasm</location>
    </subcellularLocation>
</comment>
<comment type="similarity">
    <text evidence="1">Belongs to the thioester dehydratase family. FabZ subfamily.</text>
</comment>
<protein>
    <recommendedName>
        <fullName evidence="1">3-hydroxyacyl-[acyl-carrier-protein] dehydratase FabZ</fullName>
        <ecNumber evidence="1">4.2.1.59</ecNumber>
    </recommendedName>
    <alternativeName>
        <fullName evidence="1">(3R)-hydroxymyristoyl-[acyl-carrier-protein] dehydratase</fullName>
        <shortName evidence="1">(3R)-hydroxymyristoyl-ACP dehydrase</shortName>
    </alternativeName>
    <alternativeName>
        <fullName evidence="1">Beta-hydroxyacyl-ACP dehydratase</fullName>
    </alternativeName>
</protein>
<evidence type="ECO:0000255" key="1">
    <source>
        <dbReference type="HAMAP-Rule" id="MF_00406"/>
    </source>
</evidence>
<dbReference type="EC" id="4.2.1.59" evidence="1"/>
<dbReference type="EMBL" id="CP000425">
    <property type="protein sequence ID" value="ABJ72380.1"/>
    <property type="molecule type" value="Genomic_DNA"/>
</dbReference>
<dbReference type="RefSeq" id="WP_011675909.1">
    <property type="nucleotide sequence ID" value="NC_008527.1"/>
</dbReference>
<dbReference type="SMR" id="Q030J2"/>
<dbReference type="KEGG" id="llc:LACR_0827"/>
<dbReference type="HOGENOM" id="CLU_078912_1_2_9"/>
<dbReference type="Proteomes" id="UP000000240">
    <property type="component" value="Chromosome"/>
</dbReference>
<dbReference type="GO" id="GO:0005737">
    <property type="term" value="C:cytoplasm"/>
    <property type="evidence" value="ECO:0007669"/>
    <property type="project" value="UniProtKB-SubCell"/>
</dbReference>
<dbReference type="GO" id="GO:0016020">
    <property type="term" value="C:membrane"/>
    <property type="evidence" value="ECO:0007669"/>
    <property type="project" value="GOC"/>
</dbReference>
<dbReference type="GO" id="GO:0019171">
    <property type="term" value="F:(3R)-hydroxyacyl-[acyl-carrier-protein] dehydratase activity"/>
    <property type="evidence" value="ECO:0007669"/>
    <property type="project" value="UniProtKB-EC"/>
</dbReference>
<dbReference type="GO" id="GO:0006633">
    <property type="term" value="P:fatty acid biosynthetic process"/>
    <property type="evidence" value="ECO:0007669"/>
    <property type="project" value="UniProtKB-UniRule"/>
</dbReference>
<dbReference type="GO" id="GO:0009245">
    <property type="term" value="P:lipid A biosynthetic process"/>
    <property type="evidence" value="ECO:0007669"/>
    <property type="project" value="UniProtKB-UniRule"/>
</dbReference>
<dbReference type="CDD" id="cd01288">
    <property type="entry name" value="FabZ"/>
    <property type="match status" value="1"/>
</dbReference>
<dbReference type="FunFam" id="3.10.129.10:FF:000001">
    <property type="entry name" value="3-hydroxyacyl-[acyl-carrier-protein] dehydratase FabZ"/>
    <property type="match status" value="1"/>
</dbReference>
<dbReference type="Gene3D" id="3.10.129.10">
    <property type="entry name" value="Hotdog Thioesterase"/>
    <property type="match status" value="1"/>
</dbReference>
<dbReference type="HAMAP" id="MF_00406">
    <property type="entry name" value="FabZ"/>
    <property type="match status" value="1"/>
</dbReference>
<dbReference type="InterPro" id="IPR013114">
    <property type="entry name" value="FabA_FabZ"/>
</dbReference>
<dbReference type="InterPro" id="IPR010084">
    <property type="entry name" value="FabZ"/>
</dbReference>
<dbReference type="InterPro" id="IPR029069">
    <property type="entry name" value="HotDog_dom_sf"/>
</dbReference>
<dbReference type="NCBIfam" id="TIGR01750">
    <property type="entry name" value="fabZ"/>
    <property type="match status" value="1"/>
</dbReference>
<dbReference type="NCBIfam" id="NF000582">
    <property type="entry name" value="PRK00006.1"/>
    <property type="match status" value="1"/>
</dbReference>
<dbReference type="PANTHER" id="PTHR30272">
    <property type="entry name" value="3-HYDROXYACYL-[ACYL-CARRIER-PROTEIN] DEHYDRATASE"/>
    <property type="match status" value="1"/>
</dbReference>
<dbReference type="PANTHER" id="PTHR30272:SF1">
    <property type="entry name" value="3-HYDROXYACYL-[ACYL-CARRIER-PROTEIN] DEHYDRATASE"/>
    <property type="match status" value="1"/>
</dbReference>
<dbReference type="Pfam" id="PF07977">
    <property type="entry name" value="FabA"/>
    <property type="match status" value="1"/>
</dbReference>
<dbReference type="SUPFAM" id="SSF54637">
    <property type="entry name" value="Thioesterase/thiol ester dehydrase-isomerase"/>
    <property type="match status" value="1"/>
</dbReference>
<feature type="chain" id="PRO_0000301901" description="3-hydroxyacyl-[acyl-carrier-protein] dehydratase FabZ">
    <location>
        <begin position="1"/>
        <end position="144"/>
    </location>
</feature>
<feature type="active site" evidence="1">
    <location>
        <position position="51"/>
    </location>
</feature>
<gene>
    <name evidence="1" type="primary">fabZ</name>
    <name type="ordered locus">LACR_0827</name>
</gene>
<reference key="1">
    <citation type="journal article" date="2006" name="Proc. Natl. Acad. Sci. U.S.A.">
        <title>Comparative genomics of the lactic acid bacteria.</title>
        <authorList>
            <person name="Makarova K.S."/>
            <person name="Slesarev A."/>
            <person name="Wolf Y.I."/>
            <person name="Sorokin A."/>
            <person name="Mirkin B."/>
            <person name="Koonin E.V."/>
            <person name="Pavlov A."/>
            <person name="Pavlova N."/>
            <person name="Karamychev V."/>
            <person name="Polouchine N."/>
            <person name="Shakhova V."/>
            <person name="Grigoriev I."/>
            <person name="Lou Y."/>
            <person name="Rohksar D."/>
            <person name="Lucas S."/>
            <person name="Huang K."/>
            <person name="Goodstein D.M."/>
            <person name="Hawkins T."/>
            <person name="Plengvidhya V."/>
            <person name="Welker D."/>
            <person name="Hughes J."/>
            <person name="Goh Y."/>
            <person name="Benson A."/>
            <person name="Baldwin K."/>
            <person name="Lee J.-H."/>
            <person name="Diaz-Muniz I."/>
            <person name="Dosti B."/>
            <person name="Smeianov V."/>
            <person name="Wechter W."/>
            <person name="Barabote R."/>
            <person name="Lorca G."/>
            <person name="Altermann E."/>
            <person name="Barrangou R."/>
            <person name="Ganesan B."/>
            <person name="Xie Y."/>
            <person name="Rawsthorne H."/>
            <person name="Tamir D."/>
            <person name="Parker C."/>
            <person name="Breidt F."/>
            <person name="Broadbent J.R."/>
            <person name="Hutkins R."/>
            <person name="O'Sullivan D."/>
            <person name="Steele J."/>
            <person name="Unlu G."/>
            <person name="Saier M.H. Jr."/>
            <person name="Klaenhammer T."/>
            <person name="Richardson P."/>
            <person name="Kozyavkin S."/>
            <person name="Weimer B.C."/>
            <person name="Mills D.A."/>
        </authorList>
    </citation>
    <scope>NUCLEOTIDE SEQUENCE [LARGE SCALE GENOMIC DNA]</scope>
    <source>
        <strain>SK11</strain>
    </source>
</reference>
<organism>
    <name type="scientific">Lactococcus lactis subsp. cremoris (strain SK11)</name>
    <dbReference type="NCBI Taxonomy" id="272622"/>
    <lineage>
        <taxon>Bacteria</taxon>
        <taxon>Bacillati</taxon>
        <taxon>Bacillota</taxon>
        <taxon>Bacilli</taxon>
        <taxon>Lactobacillales</taxon>
        <taxon>Streptococcaceae</taxon>
        <taxon>Lactococcus</taxon>
        <taxon>Lactococcus cremoris subsp. cremoris</taxon>
    </lineage>
</organism>
<name>FABZ_LACLS</name>
<sequence>MTEVNINVTEIMEALPHRYPFLLVDRVIDIADDEITAIKNVTINEEFFQGHFPQYPVMPGVLIMEALAQAAGVLELSKPENKGKLVFYAGMDNVKYKKQVTPGDQLVLHAKFIKRRGPIAVVEAEATVDGKLAAKGTLTFALGK</sequence>
<proteinExistence type="inferred from homology"/>
<keyword id="KW-0963">Cytoplasm</keyword>
<keyword id="KW-0441">Lipid A biosynthesis</keyword>
<keyword id="KW-0444">Lipid biosynthesis</keyword>
<keyword id="KW-0443">Lipid metabolism</keyword>
<keyword id="KW-0456">Lyase</keyword>
<accession>Q030J2</accession>